<keyword id="KW-1185">Reference proteome</keyword>
<reference key="1">
    <citation type="journal article" date="2001" name="Proc. Natl. Acad. Sci. U.S.A.">
        <title>Complete genomic sequence of Pasteurella multocida Pm70.</title>
        <authorList>
            <person name="May B.J."/>
            <person name="Zhang Q."/>
            <person name="Li L.L."/>
            <person name="Paustian M.L."/>
            <person name="Whittam T.S."/>
            <person name="Kapur V."/>
        </authorList>
    </citation>
    <scope>NUCLEOTIDE SEQUENCE [LARGE SCALE GENOMIC DNA]</scope>
    <source>
        <strain>Pm70</strain>
    </source>
</reference>
<name>Y1655_PASMU</name>
<organism>
    <name type="scientific">Pasteurella multocida (strain Pm70)</name>
    <dbReference type="NCBI Taxonomy" id="272843"/>
    <lineage>
        <taxon>Bacteria</taxon>
        <taxon>Pseudomonadati</taxon>
        <taxon>Pseudomonadota</taxon>
        <taxon>Gammaproteobacteria</taxon>
        <taxon>Pasteurellales</taxon>
        <taxon>Pasteurellaceae</taxon>
        <taxon>Pasteurella</taxon>
    </lineage>
</organism>
<protein>
    <recommendedName>
        <fullName>Uncharacterized protein PM1655</fullName>
    </recommendedName>
</protein>
<dbReference type="EMBL" id="AE004439">
    <property type="protein sequence ID" value="AAK03739.1"/>
    <property type="molecule type" value="Genomic_DNA"/>
</dbReference>
<dbReference type="STRING" id="272843.PM1655"/>
<dbReference type="EnsemblBacteria" id="AAK03739">
    <property type="protein sequence ID" value="AAK03739"/>
    <property type="gene ID" value="PM1655"/>
</dbReference>
<dbReference type="KEGG" id="pmu:PM1655"/>
<dbReference type="HOGENOM" id="CLU_1936024_0_0_6"/>
<dbReference type="Proteomes" id="UP000000809">
    <property type="component" value="Chromosome"/>
</dbReference>
<accession>Q9CKG3</accession>
<proteinExistence type="predicted"/>
<gene>
    <name type="ordered locus">PM1655</name>
</gene>
<feature type="chain" id="PRO_0000216328" description="Uncharacterized protein PM1655">
    <location>
        <begin position="1"/>
        <end position="130"/>
    </location>
</feature>
<sequence>MLYHDTQSRVIAFRYLLMILKNLKIKIRTLAPNTPKSKPANEKLPAACAEPISRTSPNNQRPSDEPIIPMMIFINRPMSLFMTCSAIQPIKAPTIIAEIQPIFFSSMSSLYTKKLKSIHDFKKRKMIYKR</sequence>